<reference key="1">
    <citation type="journal article" date="2013" name="Genome Announc.">
        <title>Genome sequence of the basidiomycetous yeast Pseudozyma antarctica T-34, a producer of the glycolipid biosurfactants mannosylerythritol lipids.</title>
        <authorList>
            <person name="Morita T."/>
            <person name="Koike H."/>
            <person name="Koyama Y."/>
            <person name="Hagiwara H."/>
            <person name="Ito E."/>
            <person name="Fukuoka T."/>
            <person name="Imura T."/>
            <person name="Machida M."/>
            <person name="Kitamoto D."/>
        </authorList>
    </citation>
    <scope>NUCLEOTIDE SEQUENCE [LARGE SCALE GENOMIC DNA]</scope>
    <scope>IDENTIFICATION</scope>
    <scope>FUNCTION</scope>
    <source>
        <strain>T-34</strain>
    </source>
</reference>
<reference key="2">
    <citation type="journal article" date="2002" name="J. Biosci. Bioeng.">
        <title>Functions and potential applications of glycolipid biosurfactants--from energy-saving materials to gene delivery carriers.</title>
        <authorList>
            <person name="Kitamoto D."/>
            <person name="Isoda H."/>
            <person name="Nakahara T."/>
        </authorList>
    </citation>
    <scope>BIOTECHNOLOGY</scope>
</reference>
<reference key="3">
    <citation type="journal article" date="2007" name="Colloids Surf. B Biointerfaces">
        <title>Kinetic studies on the interactions between glycolipid biosurfactant assembled monolayers and various classes of immunoglobulins using surface plasmon resonance.</title>
        <authorList>
            <person name="Ito S."/>
            <person name="Imura T."/>
            <person name="Fukuoka T."/>
            <person name="Morita T."/>
            <person name="Sakai H."/>
            <person name="Abe M."/>
            <person name="Kitamoto D."/>
        </authorList>
    </citation>
    <scope>BIOTECHNOLOGY</scope>
</reference>
<reference key="4">
    <citation type="journal article" date="2007" name="Langmuir">
        <title>Aqueous-phase behavior of natural glycolipid biosurfactant mannosylerythritol lipid A: sponge, cubic, and lamellar phases.</title>
        <authorList>
            <person name="Imura T."/>
            <person name="Hikosaka Y."/>
            <person name="Worakitkanchanakul W."/>
            <person name="Sakai H."/>
            <person name="Abe M."/>
            <person name="Konishi M."/>
            <person name="Minamikawa H."/>
            <person name="Kitamoto D."/>
        </authorList>
    </citation>
    <scope>BIOTECHNOLOGY</scope>
</reference>
<reference key="5">
    <citation type="journal article" date="2009" name="Biotechnol. Appl. Biochem.">
        <title>Production of glycolipid biosurfactants by basidiomycetous yeasts.</title>
        <authorList>
            <person name="Morita T."/>
            <person name="Fukuoka T."/>
            <person name="Imura T."/>
            <person name="Kitamoto D."/>
        </authorList>
    </citation>
    <scope>BIOTECHNOLOGY</scope>
</reference>
<reference key="6">
    <citation type="journal article" date="2009" name="Curr. Opin. Colloid Interface Sci.">
        <title>Self-assembling properties of glycolipid biosurfactants and their potential applications.</title>
        <authorList>
            <person name="Kitamoto D."/>
            <person name="Morita T."/>
            <person name="Fukuoka T."/>
            <person name="Konishi M."/>
            <person name="Imura T."/>
        </authorList>
    </citation>
    <scope>BIOTECHNOLOGY</scope>
</reference>
<reference key="7">
    <citation type="journal article" date="2010" name="Yeast">
        <title>Identification of the gene PaEMT1 for biosynthesis of mannosylerythritol lipids in the basidiomycetous yeast Pseudozyma antarctica.</title>
        <authorList>
            <person name="Morita T."/>
            <person name="Ito E."/>
            <person name="Kitamoto H.K."/>
            <person name="Takegawa K."/>
            <person name="Fukuoka T."/>
            <person name="Imura T."/>
            <person name="Kitamoto D."/>
        </authorList>
    </citation>
    <scope>FUNCTION</scope>
</reference>
<reference key="8">
    <citation type="journal article" date="2020" name="PLoS ONE">
        <title>Targeted transcriptomic study of the implication of central metabolic pathways in mannosylerythritol lipids biosynthesis in Pseudozyma antarctica T-34.</title>
        <authorList>
            <person name="Wada K."/>
            <person name="Koike H."/>
            <person name="Fujii T."/>
            <person name="Morita T."/>
        </authorList>
    </citation>
    <scope>FUNCTION</scope>
    <scope>PATHWAY</scope>
</reference>
<dbReference type="EC" id="2.3.1.-" evidence="1"/>
<dbReference type="EMBL" id="DF196785">
    <property type="protein sequence ID" value="GAC75891.1"/>
    <property type="molecule type" value="Genomic_DNA"/>
</dbReference>
<dbReference type="STRING" id="1151754.M9LRQ6"/>
<dbReference type="OrthoDB" id="3930at5257"/>
<dbReference type="Proteomes" id="UP000011976">
    <property type="component" value="Unassembled WGS sequence"/>
</dbReference>
<dbReference type="GO" id="GO:0016746">
    <property type="term" value="F:acyltransferase activity"/>
    <property type="evidence" value="ECO:0007669"/>
    <property type="project" value="UniProtKB-KW"/>
</dbReference>
<dbReference type="Gene3D" id="3.30.559.10">
    <property type="entry name" value="Chloramphenicol acetyltransferase-like domain"/>
    <property type="match status" value="2"/>
</dbReference>
<dbReference type="InterPro" id="IPR023213">
    <property type="entry name" value="CAT-like_dom_sf"/>
</dbReference>
<accession>M9LRQ6</accession>
<proteinExistence type="evidence at protein level"/>
<sequence length="520" mass="57208">MPATPPMPGYDAVAVPVLDSTLGNTDIMTRISLTFPTQLSLALLQDSWYELVRAWPILAARVRHTPSTPSGLSFLIPQPDKVKELEQRSRTSHKDQEKHIVIVDASSRSIASFHPITAKAIQSSLSRDTVSVGAAPDNADSLKMTCSNATTSLKQLLRADQAYITAHATVWSDATTIALAFSHIAGDAFSVKAIFEAWRQTIESAAPAPLQGVGVDPFITYLPPHGKNSKSEDTDKQGERDVGLPLGFFQYGFIDKVRLAWNLISDIKIKRPEKKFGQYYMYMPEEKVQALMAQARADVDALVSASDDSEKQALDTRISTFNVLLAWLLQNIHAANPKRKRMSTVMTIVNAKTRPPARHDPSDYPPHQLWGGALGVPLEPLASGDYASLPLGQLALHIRTSLTAQIDPANMQANIVTLLRHTRWAKPSGKLIFFARPNHYLSGCTEWRSTRFGELDFGAAASPPSSVKPVAIGTDMEIAVSKRNRWVIFGDMGGGVWFSGFMTDHEATHRDGFGRYQHVQ</sequence>
<feature type="chain" id="PRO_0000449540" description="Acetyltransferase MAT1">
    <location>
        <begin position="1"/>
        <end position="520"/>
    </location>
</feature>
<feature type="active site" description="Proton acceptor" evidence="2">
    <location>
        <position position="183"/>
    </location>
</feature>
<feature type="active site" description="Proton acceptor" evidence="2">
    <location>
        <position position="456"/>
    </location>
</feature>
<protein>
    <recommendedName>
        <fullName evidence="10">Acetyltransferase MAT1</fullName>
        <ecNumber evidence="1">2.3.1.-</ecNumber>
    </recommendedName>
    <alternativeName>
        <fullName evidence="11">Mannosylerythritol lipids (MELs) biosynthesis cluster protein MAT1T1</fullName>
    </alternativeName>
</protein>
<keyword id="KW-0012">Acyltransferase</keyword>
<keyword id="KW-1185">Reference proteome</keyword>
<keyword id="KW-0808">Transferase</keyword>
<organism>
    <name type="scientific">Pseudozyma antarctica (strain T-34)</name>
    <name type="common">Yeast</name>
    <name type="synonym">Candida antarctica</name>
    <dbReference type="NCBI Taxonomy" id="1151754"/>
    <lineage>
        <taxon>Eukaryota</taxon>
        <taxon>Fungi</taxon>
        <taxon>Dikarya</taxon>
        <taxon>Basidiomycota</taxon>
        <taxon>Ustilaginomycotina</taxon>
        <taxon>Ustilaginomycetes</taxon>
        <taxon>Ustilaginales</taxon>
        <taxon>Ustilaginaceae</taxon>
        <taxon>Moesziomyces</taxon>
    </lineage>
</organism>
<comment type="function">
    <text evidence="1 7 8 13 14">Acyl-CoA-dependent acyltransferase; part of the gene cluster that mediates the biosynthesis of mannosylerythritol lipids (MELs), surface-active substances that enhance the availability of water-insoluble substrates (Probable) (PubMed:20564650, PubMed:31923270). Depending on the number of acetyl groups, mannosylerythritol lipids can be differentiated into MEL A (fully acetylated), MEL B and MEL C (monoacetylated at R-6 and R-4, respectively), and the fully deacetylated MEL D (By similarity). The first step in the pathway is the generation of mannosylerythritol by the glycosyltransferase EMT1 which catalyzes the transfer of GDP-mannose to the C-4 atom of meso-erythritol (Probable). This reaction has to be stereospecific, since only mannosyl-D-erythritol is generated (Probable). The produced disaccharide is subsequently acylated with fatty acids of various lengths by the acyltransferases MAC1 and MAC2 at positions C-2 and C-3, repectively (Probable). The existence of MEL derivatives which carry an acetyl group at C-2 implies that at least MAC1 also accepts acetyl-CoA as a donor (Probable). The final step of MEL biosynthesis is the acetylation of the fully acylated mannosylerythritol lipids catalyzed by the acetyl-CoA-dependent acetyltransferase MAT1 (Probable). MAT1 displays a relaxed regioselectivity and is able to transfer acetylgroups to both positions C-4 and C-6 of the mannosyl moiety (Probable).</text>
</comment>
<comment type="pathway">
    <text evidence="14">Secondary metabolite biosynthesis.</text>
</comment>
<comment type="induction">
    <text evidence="8">Expression is induced when cells are grown in cultures containing vegetable oil as the carbon source.</text>
</comment>
<comment type="biotechnology">
    <text evidence="3 4 5 6 9">MELs not only have high potential as eco-friendly biosurfactants due to their excellent surface activity, but also have attracted considerable recent interest because of thei runique properties, including self-assembly, anti-tumor and cell differentiation induction activities, and moisturizing and hair-repairing properties.</text>
</comment>
<comment type="similarity">
    <text evidence="12">Belongs to the plant acyltransferase family.</text>
</comment>
<gene>
    <name evidence="10" type="primary">MAT1</name>
    <name type="ORF">PANT_19c00002</name>
</gene>
<name>MAT1_PSEA3</name>
<evidence type="ECO:0000250" key="1">
    <source>
        <dbReference type="UniProtKB" id="A0A0D1CRC9"/>
    </source>
</evidence>
<evidence type="ECO:0000250" key="2">
    <source>
        <dbReference type="UniProtKB" id="Q70PR7"/>
    </source>
</evidence>
<evidence type="ECO:0000269" key="3">
    <source>
    </source>
</evidence>
<evidence type="ECO:0000269" key="4">
    <source>
    </source>
</evidence>
<evidence type="ECO:0000269" key="5">
    <source>
    </source>
</evidence>
<evidence type="ECO:0000269" key="6">
    <source>
    </source>
</evidence>
<evidence type="ECO:0000269" key="7">
    <source>
    </source>
</evidence>
<evidence type="ECO:0000269" key="8">
    <source>
    </source>
</evidence>
<evidence type="ECO:0000269" key="9">
    <source ref="6"/>
</evidence>
<evidence type="ECO:0000303" key="10">
    <source>
    </source>
</evidence>
<evidence type="ECO:0000303" key="11">
    <source>
    </source>
</evidence>
<evidence type="ECO:0000305" key="12"/>
<evidence type="ECO:0000305" key="13">
    <source>
    </source>
</evidence>
<evidence type="ECO:0000305" key="14">
    <source>
    </source>
</evidence>